<dbReference type="EMBL" id="U43739">
    <property type="protein sequence ID" value="AAA85597.1"/>
    <property type="molecule type" value="Genomic_DNA"/>
</dbReference>
<dbReference type="EMBL" id="L75945">
    <property type="protein sequence ID" value="AAB58970.1"/>
    <property type="molecule type" value="Genomic_DNA"/>
</dbReference>
<dbReference type="EMBL" id="AE000783">
    <property type="protein sequence ID" value="AAC66675.2"/>
    <property type="status" value="ALT_INIT"/>
    <property type="molecule type" value="Genomic_DNA"/>
</dbReference>
<dbReference type="PIR" id="A70134">
    <property type="entry name" value="A70134"/>
</dbReference>
<dbReference type="RefSeq" id="NP_212407.2">
    <property type="nucleotide sequence ID" value="NC_001318.1"/>
</dbReference>
<dbReference type="SMR" id="Q44907"/>
<dbReference type="STRING" id="224326.BB_0273"/>
<dbReference type="PaxDb" id="224326-BB_0273"/>
<dbReference type="EnsemblBacteria" id="AAC66675">
    <property type="protein sequence ID" value="AAC66675"/>
    <property type="gene ID" value="BB_0273"/>
</dbReference>
<dbReference type="KEGG" id="bbu:BB_0273"/>
<dbReference type="PATRIC" id="fig|224326.49.peg.672"/>
<dbReference type="HOGENOM" id="CLU_1060363_0_0_12"/>
<dbReference type="OrthoDB" id="363096at2"/>
<dbReference type="Proteomes" id="UP000001807">
    <property type="component" value="Chromosome"/>
</dbReference>
<dbReference type="GO" id="GO:0009425">
    <property type="term" value="C:bacterial-type flagellum basal body"/>
    <property type="evidence" value="ECO:0007669"/>
    <property type="project" value="UniProtKB-SubCell"/>
</dbReference>
<dbReference type="GO" id="GO:0005886">
    <property type="term" value="C:plasma membrane"/>
    <property type="evidence" value="ECO:0007669"/>
    <property type="project" value="UniProtKB-SubCell"/>
</dbReference>
<dbReference type="GO" id="GO:0044780">
    <property type="term" value="P:bacterial-type flagellum assembly"/>
    <property type="evidence" value="ECO:0007669"/>
    <property type="project" value="InterPro"/>
</dbReference>
<dbReference type="GO" id="GO:0006605">
    <property type="term" value="P:protein targeting"/>
    <property type="evidence" value="ECO:0007669"/>
    <property type="project" value="InterPro"/>
</dbReference>
<dbReference type="InterPro" id="IPR006303">
    <property type="entry name" value="FliR"/>
</dbReference>
<dbReference type="InterPro" id="IPR002010">
    <property type="entry name" value="T3SS_IM_R"/>
</dbReference>
<dbReference type="NCBIfam" id="TIGR01400">
    <property type="entry name" value="fliR"/>
    <property type="match status" value="1"/>
</dbReference>
<dbReference type="PANTHER" id="PTHR30065">
    <property type="entry name" value="FLAGELLAR BIOSYNTHETIC PROTEIN FLIR"/>
    <property type="match status" value="1"/>
</dbReference>
<dbReference type="PANTHER" id="PTHR30065:SF1">
    <property type="entry name" value="SURFACE PRESENTATION OF ANTIGENS PROTEIN SPAR"/>
    <property type="match status" value="1"/>
</dbReference>
<dbReference type="Pfam" id="PF01311">
    <property type="entry name" value="Bac_export_1"/>
    <property type="match status" value="1"/>
</dbReference>
<dbReference type="PRINTS" id="PR00953">
    <property type="entry name" value="TYPE3IMRPROT"/>
</dbReference>
<proteinExistence type="inferred from homology"/>
<gene>
    <name type="primary">fliR</name>
    <name type="ordered locus">BB_0273</name>
</gene>
<reference key="1">
    <citation type="submission" date="1995-12" db="EMBL/GenBank/DDBJ databases">
        <authorList>
            <person name="Dunn J.J."/>
            <person name="Butler-Loffredo L."/>
            <person name="Kieleczawa J."/>
            <person name="Medalle J."/>
            <person name="Luft B.J."/>
        </authorList>
    </citation>
    <scope>NUCLEOTIDE SEQUENCE [GENOMIC DNA]</scope>
    <source>
        <strain>ATCC 35210 / DSM 4680 / CIP 102532 / B31</strain>
    </source>
</reference>
<reference key="2">
    <citation type="submission" date="1996-02" db="EMBL/GenBank/DDBJ databases">
        <authorList>
            <person name="Ge Y."/>
            <person name="Charon N.W."/>
        </authorList>
    </citation>
    <scope>NUCLEOTIDE SEQUENCE [GENOMIC DNA]</scope>
    <source>
        <strain>212</strain>
    </source>
</reference>
<reference key="3">
    <citation type="journal article" date="1997" name="Nature">
        <title>Genomic sequence of a Lyme disease spirochaete, Borrelia burgdorferi.</title>
        <authorList>
            <person name="Fraser C.M."/>
            <person name="Casjens S."/>
            <person name="Huang W.M."/>
            <person name="Sutton G.G."/>
            <person name="Clayton R.A."/>
            <person name="Lathigra R."/>
            <person name="White O."/>
            <person name="Ketchum K.A."/>
            <person name="Dodson R.J."/>
            <person name="Hickey E.K."/>
            <person name="Gwinn M.L."/>
            <person name="Dougherty B.A."/>
            <person name="Tomb J.-F."/>
            <person name="Fleischmann R.D."/>
            <person name="Richardson D.L."/>
            <person name="Peterson J.D."/>
            <person name="Kerlavage A.R."/>
            <person name="Quackenbush J."/>
            <person name="Salzberg S.L."/>
            <person name="Hanson M."/>
            <person name="van Vugt R."/>
            <person name="Palmer N."/>
            <person name="Adams M.D."/>
            <person name="Gocayne J.D."/>
            <person name="Weidman J.F."/>
            <person name="Utterback T.R."/>
            <person name="Watthey L."/>
            <person name="McDonald L.A."/>
            <person name="Artiach P."/>
            <person name="Bowman C."/>
            <person name="Garland S.A."/>
            <person name="Fujii C."/>
            <person name="Cotton M.D."/>
            <person name="Horst K."/>
            <person name="Roberts K.M."/>
            <person name="Hatch B."/>
            <person name="Smith H.O."/>
            <person name="Venter J.C."/>
        </authorList>
    </citation>
    <scope>NUCLEOTIDE SEQUENCE [LARGE SCALE GENOMIC DNA]</scope>
    <source>
        <strain>ATCC 35210 / DSM 4680 / CIP 102532 / B31</strain>
    </source>
</reference>
<evidence type="ECO:0000250" key="1"/>
<evidence type="ECO:0000255" key="2"/>
<evidence type="ECO:0000305" key="3"/>
<keyword id="KW-0975">Bacterial flagellum</keyword>
<keyword id="KW-1003">Cell membrane</keyword>
<keyword id="KW-0472">Membrane</keyword>
<keyword id="KW-1185">Reference proteome</keyword>
<keyword id="KW-0812">Transmembrane</keyword>
<keyword id="KW-1133">Transmembrane helix</keyword>
<accession>Q44907</accession>
<accession>Q44761</accession>
<feature type="chain" id="PRO_0000192050" description="Flagellar biosynthetic protein FliR">
    <location>
        <begin position="1"/>
        <end position="269"/>
    </location>
</feature>
<feature type="transmembrane region" description="Helical" evidence="2">
    <location>
        <begin position="11"/>
        <end position="31"/>
    </location>
</feature>
<feature type="transmembrane region" description="Helical" evidence="2">
    <location>
        <begin position="36"/>
        <end position="56"/>
    </location>
</feature>
<feature type="transmembrane region" description="Helical" evidence="2">
    <location>
        <begin position="75"/>
        <end position="95"/>
    </location>
</feature>
<feature type="transmembrane region" description="Helical" evidence="2">
    <location>
        <begin position="127"/>
        <end position="147"/>
    </location>
</feature>
<feature type="transmembrane region" description="Helical" evidence="2">
    <location>
        <begin position="190"/>
        <end position="210"/>
    </location>
</feature>
<feature type="transmembrane region" description="Helical" evidence="2">
    <location>
        <begin position="219"/>
        <end position="239"/>
    </location>
</feature>
<sequence length="269" mass="30876">MYYWDEILNLNFLVLKSFTILPVLVRIFMFLKFSPFFSTIKIGYFNFFFSLILSVIVVEKIKIIYPLDNMLSFALILLGEAILGLIQAFFVNIIFNVFHLVGFFFSNQIGLAYANIFDVFSEEDSMIISQIFAYLFLLLFLSSDFLLRFFVIGIHDSVLNIRVEHLVNMRNSGFVKLLLMSFGFLFEKALLISFPILSLLLLFYLVLGILSKSSPQINLLIISFSTSLFLGLLILYIGFPSLAISSKRVIELSLDSLASFLKLFSRVLK</sequence>
<name>FLIR_BORBU</name>
<comment type="function">
    <text>Role in flagellar biosynthesis.</text>
</comment>
<comment type="subcellular location">
    <subcellularLocation>
        <location evidence="3">Cell membrane</location>
        <topology evidence="3">Multi-pass membrane protein</topology>
    </subcellularLocation>
    <subcellularLocation>
        <location evidence="1">Bacterial flagellum basal body</location>
    </subcellularLocation>
</comment>
<comment type="similarity">
    <text evidence="3">Belongs to the FliR/MopE/SpaR family.</text>
</comment>
<comment type="sequence caution" evidence="3">
    <conflict type="erroneous initiation">
        <sequence resource="EMBL-CDS" id="AAC66675"/>
    </conflict>
    <text>Truncated N-terminus.</text>
</comment>
<organism>
    <name type="scientific">Borreliella burgdorferi (strain ATCC 35210 / DSM 4680 / CIP 102532 / B31)</name>
    <name type="common">Borrelia burgdorferi</name>
    <dbReference type="NCBI Taxonomy" id="224326"/>
    <lineage>
        <taxon>Bacteria</taxon>
        <taxon>Pseudomonadati</taxon>
        <taxon>Spirochaetota</taxon>
        <taxon>Spirochaetia</taxon>
        <taxon>Spirochaetales</taxon>
        <taxon>Borreliaceae</taxon>
        <taxon>Borreliella</taxon>
    </lineage>
</organism>
<protein>
    <recommendedName>
        <fullName>Flagellar biosynthetic protein FliR</fullName>
    </recommendedName>
</protein>